<reference key="1">
    <citation type="journal article" date="2004" name="Nat. Biotechnol.">
        <title>Complete sequence and comparative genome analysis of the dairy bacterium Streptococcus thermophilus.</title>
        <authorList>
            <person name="Bolotin A."/>
            <person name="Quinquis B."/>
            <person name="Renault P."/>
            <person name="Sorokin A."/>
            <person name="Ehrlich S.D."/>
            <person name="Kulakauskas S."/>
            <person name="Lapidus A."/>
            <person name="Goltsman E."/>
            <person name="Mazur M."/>
            <person name="Pusch G.D."/>
            <person name="Fonstein M."/>
            <person name="Overbeek R."/>
            <person name="Kyprides N."/>
            <person name="Purnelle B."/>
            <person name="Prozzi D."/>
            <person name="Ngui K."/>
            <person name="Masuy D."/>
            <person name="Hancy F."/>
            <person name="Burteau S."/>
            <person name="Boutry M."/>
            <person name="Delcour J."/>
            <person name="Goffeau A."/>
            <person name="Hols P."/>
        </authorList>
    </citation>
    <scope>NUCLEOTIDE SEQUENCE [LARGE SCALE GENOMIC DNA]</scope>
    <source>
        <strain>ATCC BAA-250 / LMG 18311</strain>
    </source>
</reference>
<accession>Q5M305</accession>
<organism>
    <name type="scientific">Streptococcus thermophilus (strain ATCC BAA-250 / LMG 18311)</name>
    <dbReference type="NCBI Taxonomy" id="264199"/>
    <lineage>
        <taxon>Bacteria</taxon>
        <taxon>Bacillati</taxon>
        <taxon>Bacillota</taxon>
        <taxon>Bacilli</taxon>
        <taxon>Lactobacillales</taxon>
        <taxon>Streptococcaceae</taxon>
        <taxon>Streptococcus</taxon>
    </lineage>
</organism>
<dbReference type="EMBL" id="CP000023">
    <property type="protein sequence ID" value="AAV61238.1"/>
    <property type="molecule type" value="Genomic_DNA"/>
</dbReference>
<dbReference type="RefSeq" id="WP_002951720.1">
    <property type="nucleotide sequence ID" value="NC_006448.1"/>
</dbReference>
<dbReference type="SMR" id="Q5M305"/>
<dbReference type="STRING" id="264199.stu1635"/>
<dbReference type="GeneID" id="66899381"/>
<dbReference type="KEGG" id="stl:stu1635"/>
<dbReference type="eggNOG" id="COG4465">
    <property type="taxonomic scope" value="Bacteria"/>
</dbReference>
<dbReference type="HOGENOM" id="CLU_089581_0_0_9"/>
<dbReference type="Proteomes" id="UP000001170">
    <property type="component" value="Chromosome"/>
</dbReference>
<dbReference type="GO" id="GO:0005737">
    <property type="term" value="C:cytoplasm"/>
    <property type="evidence" value="ECO:0007669"/>
    <property type="project" value="UniProtKB-SubCell"/>
</dbReference>
<dbReference type="GO" id="GO:0003677">
    <property type="term" value="F:DNA binding"/>
    <property type="evidence" value="ECO:0007669"/>
    <property type="project" value="UniProtKB-UniRule"/>
</dbReference>
<dbReference type="GO" id="GO:0003700">
    <property type="term" value="F:DNA-binding transcription factor activity"/>
    <property type="evidence" value="ECO:0007669"/>
    <property type="project" value="InterPro"/>
</dbReference>
<dbReference type="GO" id="GO:0005525">
    <property type="term" value="F:GTP binding"/>
    <property type="evidence" value="ECO:0007669"/>
    <property type="project" value="InterPro"/>
</dbReference>
<dbReference type="GO" id="GO:0045892">
    <property type="term" value="P:negative regulation of DNA-templated transcription"/>
    <property type="evidence" value="ECO:0007669"/>
    <property type="project" value="UniProtKB-UniRule"/>
</dbReference>
<dbReference type="CDD" id="cd00090">
    <property type="entry name" value="HTH_ARSR"/>
    <property type="match status" value="1"/>
</dbReference>
<dbReference type="FunFam" id="1.10.10.10:FF:000034">
    <property type="entry name" value="GTP-sensing transcriptional pleiotropic repressor CodY"/>
    <property type="match status" value="1"/>
</dbReference>
<dbReference type="FunFam" id="3.30.450.40:FF:000003">
    <property type="entry name" value="GTP-sensing transcriptional pleiotropic repressor CodY"/>
    <property type="match status" value="1"/>
</dbReference>
<dbReference type="Gene3D" id="3.30.450.40">
    <property type="match status" value="1"/>
</dbReference>
<dbReference type="Gene3D" id="1.10.10.10">
    <property type="entry name" value="Winged helix-like DNA-binding domain superfamily/Winged helix DNA-binding domain"/>
    <property type="match status" value="1"/>
</dbReference>
<dbReference type="HAMAP" id="MF_00621">
    <property type="entry name" value="HTH_type_CodY"/>
    <property type="match status" value="1"/>
</dbReference>
<dbReference type="InterPro" id="IPR011991">
    <property type="entry name" value="ArsR-like_HTH"/>
</dbReference>
<dbReference type="InterPro" id="IPR014154">
    <property type="entry name" value="CodY"/>
</dbReference>
<dbReference type="InterPro" id="IPR029016">
    <property type="entry name" value="GAF-like_dom_sf"/>
</dbReference>
<dbReference type="InterPro" id="IPR013198">
    <property type="entry name" value="GTP_trans_reg_CodY_C"/>
</dbReference>
<dbReference type="InterPro" id="IPR010312">
    <property type="entry name" value="Transc_reg_CodY_N"/>
</dbReference>
<dbReference type="InterPro" id="IPR036388">
    <property type="entry name" value="WH-like_DNA-bd_sf"/>
</dbReference>
<dbReference type="InterPro" id="IPR036390">
    <property type="entry name" value="WH_DNA-bd_sf"/>
</dbReference>
<dbReference type="NCBIfam" id="TIGR02787">
    <property type="entry name" value="codY_Gpos"/>
    <property type="match status" value="1"/>
</dbReference>
<dbReference type="NCBIfam" id="NF003170">
    <property type="entry name" value="PRK04158.1"/>
    <property type="match status" value="1"/>
</dbReference>
<dbReference type="PANTHER" id="PTHR40062:SF1">
    <property type="entry name" value="GLOBAL TRANSCRIPTIONAL REGULATOR CODY"/>
    <property type="match status" value="1"/>
</dbReference>
<dbReference type="PANTHER" id="PTHR40062">
    <property type="entry name" value="GTP-SENSING TRANSCRIPTIONAL PLEIOTROPIC REPRESSOR CODY"/>
    <property type="match status" value="1"/>
</dbReference>
<dbReference type="Pfam" id="PF06018">
    <property type="entry name" value="CodY"/>
    <property type="match status" value="1"/>
</dbReference>
<dbReference type="Pfam" id="PF08222">
    <property type="entry name" value="HTH_CodY"/>
    <property type="match status" value="1"/>
</dbReference>
<dbReference type="PIRSF" id="PIRSF011572">
    <property type="entry name" value="GTP_sensing_CodY"/>
    <property type="match status" value="1"/>
</dbReference>
<dbReference type="SUPFAM" id="SSF46785">
    <property type="entry name" value="Winged helix' DNA-binding domain"/>
    <property type="match status" value="1"/>
</dbReference>
<feature type="chain" id="PRO_0000213249" description="Global transcriptional regulator CodY">
    <location>
        <begin position="1"/>
        <end position="261"/>
    </location>
</feature>
<feature type="DNA-binding region" description="H-T-H motif" evidence="1">
    <location>
        <begin position="207"/>
        <end position="226"/>
    </location>
</feature>
<feature type="region of interest" description="GAF domain" evidence="1">
    <location>
        <begin position="1"/>
        <end position="159"/>
    </location>
</feature>
<keyword id="KW-0963">Cytoplasm</keyword>
<keyword id="KW-0238">DNA-binding</keyword>
<keyword id="KW-1185">Reference proteome</keyword>
<keyword id="KW-0678">Repressor</keyword>
<keyword id="KW-0804">Transcription</keyword>
<keyword id="KW-0805">Transcription regulation</keyword>
<gene>
    <name evidence="1" type="primary">codY</name>
    <name type="ordered locus">stu1635</name>
</gene>
<evidence type="ECO:0000255" key="1">
    <source>
        <dbReference type="HAMAP-Rule" id="MF_00621"/>
    </source>
</evidence>
<comment type="function">
    <text evidence="1">DNA-binding global transcriptional regulator which is involved in the adaptive response to starvation and acts by directly or indirectly controlling the expression of numerous genes in response to nutrient availability. During rapid exponential growth, CodY is highly active and represses genes whose products allow adaptation to nutrient depletion.</text>
</comment>
<comment type="subcellular location">
    <subcellularLocation>
        <location evidence="1">Cytoplasm</location>
    </subcellularLocation>
</comment>
<comment type="similarity">
    <text evidence="1">Belongs to the CodY family.</text>
</comment>
<protein>
    <recommendedName>
        <fullName evidence="1">Global transcriptional regulator CodY</fullName>
    </recommendedName>
</protein>
<sequence length="261" mass="28919">MANLLDKTRKITSILQRSVDSLEGDLPYNNMAAQLADIIDCNAAIVNGGGALLGFAMKYKTNNDRVEKFFKAKQLPEEYIRGISRVYDTQENIGIDSDLTIFPVELKDDFPDGLTTIAPIYGGGMRLGSFIIWRNDHDFVDDDLILVEIASTVVGLQLLHLQTENLEETIRKQTAINMAINTLSYSEIKAVSAILNELDGLEGRLTASVIADRIGITRSVIVNALRKLESAGIIESRSLGMKGTYLKVLNEGIYDKLKEYE</sequence>
<proteinExistence type="inferred from homology"/>
<name>CODY_STRT2</name>